<keyword id="KW-0037">Angiogenesis</keyword>
<keyword id="KW-1003">Cell membrane</keyword>
<keyword id="KW-0966">Cell projection</keyword>
<keyword id="KW-0221">Differentiation</keyword>
<keyword id="KW-1015">Disulfide bond</keyword>
<keyword id="KW-0325">Glycoprotein</keyword>
<keyword id="KW-0472">Membrane</keyword>
<keyword id="KW-1185">Reference proteome</keyword>
<keyword id="KW-0677">Repeat</keyword>
<keyword id="KW-0732">Signal</keyword>
<keyword id="KW-0812">Transmembrane</keyword>
<keyword id="KW-1133">Transmembrane helix</keyword>
<accession>A7MBS7</accession>
<accession>E3VW06</accession>
<accession>F1QPE6</accession>
<protein>
    <recommendedName>
        <fullName>Thrombospondin type-1 domain-containing protein 7A</fullName>
    </recommendedName>
</protein>
<dbReference type="EMBL" id="CR381594">
    <property type="status" value="NOT_ANNOTATED_CDS"/>
    <property type="molecule type" value="Genomic_DNA"/>
</dbReference>
<dbReference type="EMBL" id="CR735126">
    <property type="status" value="NOT_ANNOTATED_CDS"/>
    <property type="molecule type" value="Genomic_DNA"/>
</dbReference>
<dbReference type="EMBL" id="CR627498">
    <property type="status" value="NOT_ANNOTATED_CDS"/>
    <property type="molecule type" value="Genomic_DNA"/>
</dbReference>
<dbReference type="EMBL" id="BC151897">
    <property type="protein sequence ID" value="AAI51898.1"/>
    <property type="molecule type" value="mRNA"/>
</dbReference>
<dbReference type="EMBL" id="HQ267705">
    <property type="protein sequence ID" value="ADO87037.1"/>
    <property type="status" value="ALT_TERM"/>
    <property type="molecule type" value="mRNA"/>
</dbReference>
<dbReference type="SMR" id="A7MBS7"/>
<dbReference type="FunCoup" id="A7MBS7">
    <property type="interactions" value="489"/>
</dbReference>
<dbReference type="STRING" id="7955.ENSDARP00000138800"/>
<dbReference type="GlyCosmos" id="A7MBS7">
    <property type="glycosylation" value="12 sites, No reported glycans"/>
</dbReference>
<dbReference type="PaxDb" id="7955-ENSDARP00000082128"/>
<dbReference type="AGR" id="ZFIN:ZDB-GENE-060503-709"/>
<dbReference type="ZFIN" id="ZDB-GENE-060503-709">
    <property type="gene designation" value="thsd7aa"/>
</dbReference>
<dbReference type="HOGENOM" id="CLU_004819_0_0_1"/>
<dbReference type="InParanoid" id="A7MBS7"/>
<dbReference type="TreeFam" id="TF329791"/>
<dbReference type="Reactome" id="R-DRE-5173214">
    <property type="pathway name" value="O-glycosylation of TSR domain-containing proteins"/>
</dbReference>
<dbReference type="PRO" id="PR:A7MBS7"/>
<dbReference type="Proteomes" id="UP000000437">
    <property type="component" value="Unplaced"/>
</dbReference>
<dbReference type="GO" id="GO:0042995">
    <property type="term" value="C:cell projection"/>
    <property type="evidence" value="ECO:0007669"/>
    <property type="project" value="UniProtKB-SubCell"/>
</dbReference>
<dbReference type="GO" id="GO:0005886">
    <property type="term" value="C:plasma membrane"/>
    <property type="evidence" value="ECO:0000318"/>
    <property type="project" value="GO_Central"/>
</dbReference>
<dbReference type="GO" id="GO:0030036">
    <property type="term" value="P:actin cytoskeleton organization"/>
    <property type="evidence" value="ECO:0000318"/>
    <property type="project" value="GO_Central"/>
</dbReference>
<dbReference type="GO" id="GO:0001525">
    <property type="term" value="P:angiogenesis"/>
    <property type="evidence" value="ECO:0000315"/>
    <property type="project" value="ZFIN"/>
</dbReference>
<dbReference type="GO" id="GO:0048675">
    <property type="term" value="P:axon extension"/>
    <property type="evidence" value="ECO:0000315"/>
    <property type="project" value="ZFIN"/>
</dbReference>
<dbReference type="GO" id="GO:0043534">
    <property type="term" value="P:blood vessel endothelial cell migration"/>
    <property type="evidence" value="ECO:0000315"/>
    <property type="project" value="ZFIN"/>
</dbReference>
<dbReference type="GO" id="GO:0003094">
    <property type="term" value="P:glomerular filtration"/>
    <property type="evidence" value="ECO:0000315"/>
    <property type="project" value="ZFIN"/>
</dbReference>
<dbReference type="GO" id="GO:0032835">
    <property type="term" value="P:glomerulus development"/>
    <property type="evidence" value="ECO:0000315"/>
    <property type="project" value="ZFIN"/>
</dbReference>
<dbReference type="GO" id="GO:0072015">
    <property type="term" value="P:podocyte development"/>
    <property type="evidence" value="ECO:0000315"/>
    <property type="project" value="ZFIN"/>
</dbReference>
<dbReference type="GO" id="GO:0008593">
    <property type="term" value="P:regulation of Notch signaling pathway"/>
    <property type="evidence" value="ECO:0000315"/>
    <property type="project" value="ZFIN"/>
</dbReference>
<dbReference type="GO" id="GO:0002040">
    <property type="term" value="P:sprouting angiogenesis"/>
    <property type="evidence" value="ECO:0000315"/>
    <property type="project" value="ZFIN"/>
</dbReference>
<dbReference type="FunFam" id="2.20.100.10:FF:000014">
    <property type="entry name" value="Thrombospondin type 1 domain containing 7A"/>
    <property type="match status" value="1"/>
</dbReference>
<dbReference type="FunFam" id="2.20.100.10:FF:000017">
    <property type="entry name" value="Thrombospondin type 1 domain containing 7A"/>
    <property type="match status" value="1"/>
</dbReference>
<dbReference type="FunFam" id="2.20.100.10:FF:000018">
    <property type="entry name" value="Thrombospondin type 1 domain containing 7A"/>
    <property type="match status" value="1"/>
</dbReference>
<dbReference type="FunFam" id="2.20.100.10:FF:000019">
    <property type="entry name" value="Thrombospondin type 1 domain containing 7A"/>
    <property type="match status" value="1"/>
</dbReference>
<dbReference type="FunFam" id="2.20.100.10:FF:000020">
    <property type="entry name" value="Thrombospondin type 1 domain containing 7A"/>
    <property type="match status" value="1"/>
</dbReference>
<dbReference type="FunFam" id="2.20.100.10:FF:000027">
    <property type="entry name" value="Thrombospondin type 1 domain containing 7A"/>
    <property type="match status" value="1"/>
</dbReference>
<dbReference type="FunFam" id="2.20.100.10:FF:000031">
    <property type="entry name" value="Thrombospondin type 1 domain containing 7A"/>
    <property type="match status" value="1"/>
</dbReference>
<dbReference type="FunFam" id="2.20.100.10:FF:000050">
    <property type="entry name" value="Thrombospondin type 1 domain containing 7B"/>
    <property type="match status" value="1"/>
</dbReference>
<dbReference type="FunFam" id="2.20.100.10:FF:000015">
    <property type="entry name" value="Thrombospondin, type I, domain containing 7A"/>
    <property type="match status" value="1"/>
</dbReference>
<dbReference type="Gene3D" id="2.20.100.10">
    <property type="entry name" value="Thrombospondin type-1 (TSP1) repeat"/>
    <property type="match status" value="10"/>
</dbReference>
<dbReference type="InterPro" id="IPR051418">
    <property type="entry name" value="Spondin/Thrombospondin_T1"/>
</dbReference>
<dbReference type="InterPro" id="IPR000884">
    <property type="entry name" value="TSP1_rpt"/>
</dbReference>
<dbReference type="InterPro" id="IPR036383">
    <property type="entry name" value="TSP1_rpt_sf"/>
</dbReference>
<dbReference type="InterPro" id="IPR044004">
    <property type="entry name" value="TSP1_spondin_dom"/>
</dbReference>
<dbReference type="InterPro" id="IPR056991">
    <property type="entry name" value="TSP1_TSH7A-B_C"/>
</dbReference>
<dbReference type="PANTHER" id="PTHR11311">
    <property type="entry name" value="SPONDIN"/>
    <property type="match status" value="1"/>
</dbReference>
<dbReference type="PANTHER" id="PTHR11311:SF8">
    <property type="entry name" value="THROMBOSPONDIN TYPE-1 DOMAIN-CONTAINING PROTEIN 7A"/>
    <property type="match status" value="1"/>
</dbReference>
<dbReference type="Pfam" id="PF19030">
    <property type="entry name" value="TSP1_ADAMTS"/>
    <property type="match status" value="1"/>
</dbReference>
<dbReference type="Pfam" id="PF19028">
    <property type="entry name" value="TSP1_spondin"/>
    <property type="match status" value="5"/>
</dbReference>
<dbReference type="Pfam" id="PF23308">
    <property type="entry name" value="TSP1_TSH7A-B_C"/>
    <property type="match status" value="1"/>
</dbReference>
<dbReference type="Pfam" id="PF00090">
    <property type="entry name" value="TSP_1"/>
    <property type="match status" value="3"/>
</dbReference>
<dbReference type="SMART" id="SM00209">
    <property type="entry name" value="TSP1"/>
    <property type="match status" value="14"/>
</dbReference>
<dbReference type="SUPFAM" id="SSF82895">
    <property type="entry name" value="TSP-1 type 1 repeat"/>
    <property type="match status" value="8"/>
</dbReference>
<dbReference type="PROSITE" id="PS50092">
    <property type="entry name" value="TSP1"/>
    <property type="match status" value="11"/>
</dbReference>
<evidence type="ECO:0000250" key="1">
    <source>
        <dbReference type="UniProtKB" id="Q69ZU6"/>
    </source>
</evidence>
<evidence type="ECO:0000250" key="2">
    <source>
        <dbReference type="UniProtKB" id="Q9UPZ6"/>
    </source>
</evidence>
<evidence type="ECO:0000255" key="3"/>
<evidence type="ECO:0000255" key="4">
    <source>
        <dbReference type="PROSITE-ProRule" id="PRU00210"/>
    </source>
</evidence>
<evidence type="ECO:0000255" key="5">
    <source>
        <dbReference type="PROSITE-ProRule" id="PRU00498"/>
    </source>
</evidence>
<evidence type="ECO:0000256" key="6">
    <source>
        <dbReference type="SAM" id="MobiDB-lite"/>
    </source>
</evidence>
<evidence type="ECO:0000269" key="7">
    <source>
    </source>
</evidence>
<evidence type="ECO:0000269" key="8">
    <source>
    </source>
</evidence>
<evidence type="ECO:0000269" key="9">
    <source>
    </source>
</evidence>
<evidence type="ECO:0000303" key="10">
    <source>
    </source>
</evidence>
<evidence type="ECO:0000305" key="11"/>
<evidence type="ECO:0000312" key="12">
    <source>
        <dbReference type="EMBL" id="AAI51898.1"/>
    </source>
</evidence>
<evidence type="ECO:0000312" key="13">
    <source>
        <dbReference type="EMBL" id="ADO87037.1"/>
    </source>
</evidence>
<evidence type="ECO:0000312" key="14">
    <source>
        <dbReference type="ZFIN" id="ZDB-GENE-060503-709"/>
    </source>
</evidence>
<comment type="function">
    <text evidence="1 7 8 9">Required for normal sprouting angiogenesis and normal embryonic development of intersegmental vessels (ISV) (PubMed:21520329, PubMed:27484901). Required for normal function of the glomerular filtration barrier (PubMed:28814510). Required for normal axon outgrowth on embryonic motor neurons at the level of the horizontal myoseptum. Required for normal expression of notch1b, suggesting that its functions in angiogenesis and neuron outgrowth are due to decreased expression of notch1b (PubMed:27484901). Plays a role in actin cytoskeleton rearrangement (By similarity).</text>
</comment>
<comment type="subcellular location">
    <subcellularLocation>
        <location evidence="1">Cell membrane</location>
        <topology evidence="1">Single-pass type I membrane protein</topology>
    </subcellularLocation>
    <subcellularLocation>
        <location evidence="1">Cell projection</location>
    </subcellularLocation>
    <text evidence="1">Detected on podocyte foot processes.</text>
</comment>
<comment type="developmental stage">
    <text evidence="7 8 9">Detected in larvae (at protein level) (PubMed:28814510). First detected in the dorsal region of the embryo at 15 hpf. Detected along the ventral edge of the neural tube from 22 to 32 hpf. Highly expressed in retina, cranial ganglia, pectoral fin, brain and spinal cord at 48 hpf (PubMed:21520329). Detected in primary motor neurons along the ventral edge of the neuron tube at 24 hpf (PubMed:27484901).</text>
</comment>
<comment type="domain">
    <text evidence="2">Sequence analysis combined with the expression of constructs corresponding each to two or three adjacent TSP type-1 domains suggests the presence of 21 TSP type-1 domains; not all of these are detected by standard bioinformatic tools.</text>
</comment>
<comment type="PTM">
    <text evidence="1">Extensively N-glycosylated.</text>
</comment>
<comment type="disruption phenotype">
    <text evidence="7 8 9">Morpholino knockdown of the protein impairs normal embryonic development of intersegmental vessels (ISV) (PubMed:21520329, PubMed:27484901). Morpholino knockdown of the protein causes malformation of the glomerular tufts and a reduction in the number of podocytes per glomerular tuft, and causes pericardial edema in many cases, probably due to impaired function of the glomerular filtration barrier (PubMed:28814510). Morpholino knockdown of the protein causes loss of the parachordal chain in the developing vasculature and absence of laterally projecting motor axons at the level of the horizontal myoseptum (PubMed:27484901).</text>
</comment>
<comment type="sequence caution" evidence="11">
    <conflict type="miscellaneous discrepancy">
        <sequence resource="EMBL-CDS" id="ADO87037"/>
    </conflict>
    <text>Contaminating sequence. Potential poly-A sequence.</text>
</comment>
<feature type="signal peptide" evidence="3">
    <location>
        <begin position="1"/>
        <end position="36"/>
    </location>
</feature>
<feature type="chain" id="PRO_5002713241" description="Thrombospondin type-1 domain-containing protein 7A">
    <location>
        <begin position="37"/>
        <end position="1686"/>
    </location>
</feature>
<feature type="topological domain" description="Extracellular" evidence="11">
    <location>
        <begin position="37"/>
        <end position="1635"/>
    </location>
</feature>
<feature type="transmembrane region" description="Helical" evidence="3">
    <location>
        <begin position="1636"/>
        <end position="1656"/>
    </location>
</feature>
<feature type="topological domain" description="Cytoplasmic" evidence="11">
    <location>
        <begin position="1657"/>
        <end position="1686"/>
    </location>
</feature>
<feature type="domain" description="TSP type-1 1" evidence="4">
    <location>
        <begin position="44"/>
        <end position="103"/>
    </location>
</feature>
<feature type="domain" description="TSP type-1 2" evidence="4">
    <location>
        <begin position="107"/>
        <end position="181"/>
    </location>
</feature>
<feature type="domain" description="TSP type-1 3" evidence="4">
    <location>
        <begin position="183"/>
        <end position="236"/>
    </location>
</feature>
<feature type="domain" description="TSP type-1 4" evidence="4">
    <location>
        <begin position="385"/>
        <end position="441"/>
    </location>
</feature>
<feature type="domain" description="TSP type-1 5" evidence="4">
    <location>
        <begin position="448"/>
        <end position="535"/>
    </location>
</feature>
<feature type="domain" description="TSP type-1 6" evidence="4">
    <location>
        <begin position="537"/>
        <end position="596"/>
    </location>
</feature>
<feature type="domain" description="TSP type-1 7" evidence="4">
    <location>
        <begin position="656"/>
        <end position="717"/>
    </location>
</feature>
<feature type="domain" description="TSP type-1 8" evidence="4">
    <location>
        <begin position="718"/>
        <end position="797"/>
    </location>
</feature>
<feature type="domain" description="TSP type-1 9" evidence="4">
    <location>
        <begin position="799"/>
        <end position="859"/>
    </location>
</feature>
<feature type="domain" description="TSP type-1 10" evidence="4">
    <location>
        <begin position="860"/>
        <end position="932"/>
    </location>
</feature>
<feature type="domain" description="TSP type-1 11" evidence="4">
    <location>
        <begin position="934"/>
        <end position="985"/>
    </location>
</feature>
<feature type="domain" description="TSP type-1 12" evidence="4">
    <location>
        <begin position="988"/>
        <end position="1061"/>
    </location>
</feature>
<feature type="domain" description="TSP type-1 13" evidence="4">
    <location>
        <begin position="1063"/>
        <end position="1123"/>
    </location>
</feature>
<feature type="domain" description="TSP type-1 14" evidence="4">
    <location>
        <begin position="1124"/>
        <end position="1191"/>
    </location>
</feature>
<feature type="domain" description="TSP type-1 15" evidence="4">
    <location>
        <begin position="1193"/>
        <end position="1247"/>
    </location>
</feature>
<feature type="domain" description="TSP type-1 16" evidence="3">
    <location>
        <begin position="1248"/>
        <end position="1311"/>
    </location>
</feature>
<feature type="domain" description="TSP type-1 17" evidence="4">
    <location>
        <begin position="1313"/>
        <end position="1368"/>
    </location>
</feature>
<feature type="domain" description="TSP type-1 18" evidence="4">
    <location>
        <begin position="1369"/>
        <end position="1439"/>
    </location>
</feature>
<feature type="domain" description="TSP type-1 19" evidence="4">
    <location>
        <begin position="1441"/>
        <end position="1502"/>
    </location>
</feature>
<feature type="region of interest" description="Disordered" evidence="6">
    <location>
        <begin position="257"/>
        <end position="321"/>
    </location>
</feature>
<feature type="compositionally biased region" description="Basic and acidic residues" evidence="6">
    <location>
        <begin position="259"/>
        <end position="272"/>
    </location>
</feature>
<feature type="compositionally biased region" description="Basic and acidic residues" evidence="6">
    <location>
        <begin position="294"/>
        <end position="321"/>
    </location>
</feature>
<feature type="glycosylation site" description="N-linked (GlcNAc...) asparagine" evidence="5">
    <location>
        <position position="223"/>
    </location>
</feature>
<feature type="glycosylation site" description="N-linked (GlcNAc...) asparagine" evidence="5">
    <location>
        <position position="475"/>
    </location>
</feature>
<feature type="glycosylation site" description="N-linked (GlcNAc...) asparagine" evidence="5">
    <location>
        <position position="525"/>
    </location>
</feature>
<feature type="glycosylation site" description="N-linked (GlcNAc...) asparagine" evidence="5">
    <location>
        <position position="701"/>
    </location>
</feature>
<feature type="glycosylation site" description="N-linked (GlcNAc...) asparagine" evidence="5">
    <location>
        <position position="739"/>
    </location>
</feature>
<feature type="glycosylation site" description="N-linked (GlcNAc...) asparagine" evidence="5">
    <location>
        <position position="996"/>
    </location>
</feature>
<feature type="glycosylation site" description="N-linked (GlcNAc...) asparagine" evidence="5">
    <location>
        <position position="1071"/>
    </location>
</feature>
<feature type="glycosylation site" description="N-linked (GlcNAc...) asparagine" evidence="5">
    <location>
        <position position="1212"/>
    </location>
</feature>
<feature type="glycosylation site" description="N-linked (GlcNAc...) asparagine" evidence="5">
    <location>
        <position position="1252"/>
    </location>
</feature>
<feature type="glycosylation site" description="N-linked (GlcNAc...) asparagine" evidence="5">
    <location>
        <position position="1303"/>
    </location>
</feature>
<feature type="glycosylation site" description="N-linked (GlcNAc...) asparagine" evidence="5">
    <location>
        <position position="1393"/>
    </location>
</feature>
<feature type="glycosylation site" description="N-linked (GlcNAc...) asparagine" evidence="5">
    <location>
        <position position="1527"/>
    </location>
</feature>
<feature type="disulfide bond" evidence="4">
    <location>
        <begin position="460"/>
        <end position="530"/>
    </location>
</feature>
<feature type="disulfide bond" evidence="4">
    <location>
        <begin position="480"/>
        <end position="534"/>
    </location>
</feature>
<feature type="disulfide bond" evidence="4">
    <location>
        <begin position="491"/>
        <end position="519"/>
    </location>
</feature>
<feature type="disulfide bond" evidence="4">
    <location>
        <begin position="657"/>
        <end position="699"/>
    </location>
</feature>
<feature type="disulfide bond" evidence="4">
    <location>
        <begin position="668"/>
        <end position="672"/>
    </location>
</feature>
<feature type="disulfide bond" evidence="4">
    <location>
        <begin position="711"/>
        <end position="716"/>
    </location>
</feature>
<feature type="disulfide bond" evidence="4">
    <location>
        <begin position="729"/>
        <end position="792"/>
    </location>
</feature>
<feature type="disulfide bond" evidence="4">
    <location>
        <begin position="756"/>
        <end position="796"/>
    </location>
</feature>
<feature type="disulfide bond" evidence="4">
    <location>
        <begin position="767"/>
        <end position="780"/>
    </location>
</feature>
<feature type="disulfide bond" evidence="4">
    <location>
        <begin position="800"/>
        <end position="842"/>
    </location>
</feature>
<feature type="disulfide bond" evidence="4">
    <location>
        <begin position="811"/>
        <end position="815"/>
    </location>
</feature>
<feature type="disulfide bond" evidence="4">
    <location>
        <begin position="852"/>
        <end position="858"/>
    </location>
</feature>
<feature type="disulfide bond" evidence="4">
    <location>
        <begin position="1000"/>
        <end position="1056"/>
    </location>
</feature>
<feature type="disulfide bond" evidence="4">
    <location>
        <begin position="1022"/>
        <end position="1060"/>
    </location>
</feature>
<feature type="disulfide bond" evidence="4">
    <location>
        <begin position="1033"/>
        <end position="1046"/>
    </location>
</feature>
<feature type="disulfide bond" evidence="4">
    <location>
        <begin position="1064"/>
        <end position="1101"/>
    </location>
</feature>
<feature type="disulfide bond" evidence="4">
    <location>
        <begin position="1075"/>
        <end position="1079"/>
    </location>
</feature>
<feature type="disulfide bond" evidence="4">
    <location>
        <begin position="1118"/>
        <end position="1122"/>
    </location>
</feature>
<feature type="disulfide bond" evidence="4">
    <location>
        <begin position="1240"/>
        <end position="1246"/>
    </location>
</feature>
<feature type="disulfide bond" evidence="4">
    <location>
        <begin position="1259"/>
        <end position="1306"/>
    </location>
</feature>
<feature type="disulfide bond" evidence="4">
    <location>
        <begin position="1267"/>
        <end position="1310"/>
    </location>
</feature>
<feature type="disulfide bond" evidence="4">
    <location>
        <begin position="1278"/>
        <end position="1291"/>
    </location>
</feature>
<feature type="disulfide bond" evidence="4">
    <location>
        <begin position="1314"/>
        <end position="1352"/>
    </location>
</feature>
<feature type="disulfide bond" evidence="4">
    <location>
        <begin position="1325"/>
        <end position="1329"/>
    </location>
</feature>
<feature type="disulfide bond" evidence="4">
    <location>
        <begin position="1362"/>
        <end position="1367"/>
    </location>
</feature>
<feature type="disulfide bond" evidence="4">
    <location>
        <begin position="1378"/>
        <end position="1434"/>
    </location>
</feature>
<feature type="disulfide bond" evidence="4">
    <location>
        <begin position="1385"/>
        <end position="1438"/>
    </location>
</feature>
<feature type="disulfide bond" evidence="4">
    <location>
        <begin position="1396"/>
        <end position="1415"/>
    </location>
</feature>
<feature type="disulfide bond" evidence="4">
    <location>
        <begin position="1442"/>
        <end position="1486"/>
    </location>
</feature>
<feature type="disulfide bond" evidence="4">
    <location>
        <begin position="1453"/>
        <end position="1457"/>
    </location>
</feature>
<feature type="disulfide bond" evidence="4">
    <location>
        <begin position="1496"/>
        <end position="1501"/>
    </location>
</feature>
<sequence>MGLASRAPGKGGTSAGALASLFRVALLFFGLWDVQTQTVANTRPTYIWQTGPWGRCMGSECGPGGSQSRAVWCAHSEGWTTLHTNCQQSERPSNQQSCFRVCDWHKELYDWQLGAWNQCVPVSMRNAGVPRPAVCTRGEEGIQTREVGCVHKSDGVPAEDAICEYFEPKPRLEQACLIPCPRDCVVSEFSPWTSCSKSCGMGLQNRLRSVLAPPLFGGSACPNLTEFRTCQPGKCEGVESLHSLRVGPWGQCMASPIRQARDTGEARVPKAERKAKRDRQARQERQGKRRKNKEKKELRESKGERVRERVKEKKRMRDPETRELIKKKRTRNRQNRQGLKFWDLQVGYQTREVTCVHRSGSTASISQCTQQTLPVTYQACVISKDCEVSEWSDWSVCSKECYDLNGRKGQRTRTRQVQQFPVGGGAECPELEESEPCSPQGEGIPPCVVYNWRSTEWSDCRVDVLLSQQDRRRSNQTGLCGGGVQTREVYCVQAPSETSSNLGSLKSKDALRPVNSDLCLGVPHNTTQLCHIPCPVECEVSAWSAWGPCTFENCQDQSTKKGFKLRKRKIMNEPTGGTGNCPHLTEAIPCEEPSCYDWLLVKLEECVPDNDKVCGPGTQNPQVQCINSDGEFVDRQLCRDAILPMPVLCEVSCPKDCVLSPWTSWSLCSNTCSGKNSEGKQTRARSILAYNAGDGGVQCPNSSALQEVRSCNDHPCTVYHWQTGPWGQCIEDTSVPSANSSISRAVPGTAVNDAFCSVGMQTRKVICVRVNVGQVPPKKCPESLRPETVRPCLLPCKRDCVVTPYSDWTPCPSICQTGGSVKKKQSRKRIIIQLPANGGQDCPEVLFQEKDCDASSVCPGYRWKTHKWRRCQLVPWSIRQDSPGAQETCGPGLQARAVSCKKLDSGPADVAACLKFAGPMPQLTQSCQLPCQDDCQLTAWSKFSTCAADCVGVRTRKRTLVGKSKKREQCKNTQMYPLSETQYCPCNKYNAQPVGNWSDCILPEGRVEGLLGMKVQGDIKECGQGYRYQAMVCYDQDNRLVETSRCNSHGYIEEACIIPCPSDCKLSEWSNWSRCSKSCGSGVKVRSKWLREKPYNGGRPCPKLDHVNQAQVYEVVPCLSDCSQYVWVAEPWSVWKVSNVDLKENCGEGVQTRKVRCMQNTVDGPSDPVEDYLCDPEEMPLGARESKLPCPEDCVLTDWGSWSRCPLPCNVNSTRQRSASPIRQPSERKQCPSTTEKEICTLNSNCFHYSYNITDWSTCQLSERAVCGVGFKTRMLDCVRSDSKSVDLKFCEELGLEKKWQMNASCVVECPVNCQLSDWSSWSECSHTCGLAGKLWRRRTVIQASQGDGRPCSSQLEQWKPCPVKPCFSWRYSVWSPCKSEGARCGEGLRFRNVSCFVSDGSGKDAGSMVDEELCGDLEQTVDGDKQIILQESCTVPCPGECYLTDWTMWSPCQLSCIGGDDLGFGSVQVRSRAVLAQEPENLLQCPEQEWEARPCTEGQCYDYKWMTGAWRGSSRQVWCQRSDGLNVTGGCQSTTEPVSDRSCDPACDKPRSICTEAGICGCEEGYTEVMTSDGVLDQCTVIPVLEIPTAGDSKADVKTIRALNPTEPTANMPGRAGRTWFLQPFGPDGKLKTWVYGVAAGAFVLLVFIVSMTYLACKKPKKPQRRQMNNRLKPLTLAYDGDADM</sequence>
<proteinExistence type="evidence at protein level"/>
<reference key="1">
    <citation type="journal article" date="2013" name="Nature">
        <title>The zebrafish reference genome sequence and its relationship to the human genome.</title>
        <authorList>
            <person name="Howe K."/>
            <person name="Clark M.D."/>
            <person name="Torroja C.F."/>
            <person name="Torrance J."/>
            <person name="Berthelot C."/>
            <person name="Muffato M."/>
            <person name="Collins J.E."/>
            <person name="Humphray S."/>
            <person name="McLaren K."/>
            <person name="Matthews L."/>
            <person name="McLaren S."/>
            <person name="Sealy I."/>
            <person name="Caccamo M."/>
            <person name="Churcher C."/>
            <person name="Scott C."/>
            <person name="Barrett J.C."/>
            <person name="Koch R."/>
            <person name="Rauch G.J."/>
            <person name="White S."/>
            <person name="Chow W."/>
            <person name="Kilian B."/>
            <person name="Quintais L.T."/>
            <person name="Guerra-Assuncao J.A."/>
            <person name="Zhou Y."/>
            <person name="Gu Y."/>
            <person name="Yen J."/>
            <person name="Vogel J.H."/>
            <person name="Eyre T."/>
            <person name="Redmond S."/>
            <person name="Banerjee R."/>
            <person name="Chi J."/>
            <person name="Fu B."/>
            <person name="Langley E."/>
            <person name="Maguire S.F."/>
            <person name="Laird G.K."/>
            <person name="Lloyd D."/>
            <person name="Kenyon E."/>
            <person name="Donaldson S."/>
            <person name="Sehra H."/>
            <person name="Almeida-King J."/>
            <person name="Loveland J."/>
            <person name="Trevanion S."/>
            <person name="Jones M."/>
            <person name="Quail M."/>
            <person name="Willey D."/>
            <person name="Hunt A."/>
            <person name="Burton J."/>
            <person name="Sims S."/>
            <person name="McLay K."/>
            <person name="Plumb B."/>
            <person name="Davis J."/>
            <person name="Clee C."/>
            <person name="Oliver K."/>
            <person name="Clark R."/>
            <person name="Riddle C."/>
            <person name="Elliot D."/>
            <person name="Threadgold G."/>
            <person name="Harden G."/>
            <person name="Ware D."/>
            <person name="Begum S."/>
            <person name="Mortimore B."/>
            <person name="Kerry G."/>
            <person name="Heath P."/>
            <person name="Phillimore B."/>
            <person name="Tracey A."/>
            <person name="Corby N."/>
            <person name="Dunn M."/>
            <person name="Johnson C."/>
            <person name="Wood J."/>
            <person name="Clark S."/>
            <person name="Pelan S."/>
            <person name="Griffiths G."/>
            <person name="Smith M."/>
            <person name="Glithero R."/>
            <person name="Howden P."/>
            <person name="Barker N."/>
            <person name="Lloyd C."/>
            <person name="Stevens C."/>
            <person name="Harley J."/>
            <person name="Holt K."/>
            <person name="Panagiotidis G."/>
            <person name="Lovell J."/>
            <person name="Beasley H."/>
            <person name="Henderson C."/>
            <person name="Gordon D."/>
            <person name="Auger K."/>
            <person name="Wright D."/>
            <person name="Collins J."/>
            <person name="Raisen C."/>
            <person name="Dyer L."/>
            <person name="Leung K."/>
            <person name="Robertson L."/>
            <person name="Ambridge K."/>
            <person name="Leongamornlert D."/>
            <person name="McGuire S."/>
            <person name="Gilderthorp R."/>
            <person name="Griffiths C."/>
            <person name="Manthravadi D."/>
            <person name="Nichol S."/>
            <person name="Barker G."/>
            <person name="Whitehead S."/>
            <person name="Kay M."/>
            <person name="Brown J."/>
            <person name="Murnane C."/>
            <person name="Gray E."/>
            <person name="Humphries M."/>
            <person name="Sycamore N."/>
            <person name="Barker D."/>
            <person name="Saunders D."/>
            <person name="Wallis J."/>
            <person name="Babbage A."/>
            <person name="Hammond S."/>
            <person name="Mashreghi-Mohammadi M."/>
            <person name="Barr L."/>
            <person name="Martin S."/>
            <person name="Wray P."/>
            <person name="Ellington A."/>
            <person name="Matthews N."/>
            <person name="Ellwood M."/>
            <person name="Woodmansey R."/>
            <person name="Clark G."/>
            <person name="Cooper J."/>
            <person name="Tromans A."/>
            <person name="Grafham D."/>
            <person name="Skuce C."/>
            <person name="Pandian R."/>
            <person name="Andrews R."/>
            <person name="Harrison E."/>
            <person name="Kimberley A."/>
            <person name="Garnett J."/>
            <person name="Fosker N."/>
            <person name="Hall R."/>
            <person name="Garner P."/>
            <person name="Kelly D."/>
            <person name="Bird C."/>
            <person name="Palmer S."/>
            <person name="Gehring I."/>
            <person name="Berger A."/>
            <person name="Dooley C.M."/>
            <person name="Ersan-Urun Z."/>
            <person name="Eser C."/>
            <person name="Geiger H."/>
            <person name="Geisler M."/>
            <person name="Karotki L."/>
            <person name="Kirn A."/>
            <person name="Konantz J."/>
            <person name="Konantz M."/>
            <person name="Oberlander M."/>
            <person name="Rudolph-Geiger S."/>
            <person name="Teucke M."/>
            <person name="Lanz C."/>
            <person name="Raddatz G."/>
            <person name="Osoegawa K."/>
            <person name="Zhu B."/>
            <person name="Rapp A."/>
            <person name="Widaa S."/>
            <person name="Langford C."/>
            <person name="Yang F."/>
            <person name="Schuster S.C."/>
            <person name="Carter N.P."/>
            <person name="Harrow J."/>
            <person name="Ning Z."/>
            <person name="Herrero J."/>
            <person name="Searle S.M."/>
            <person name="Enright A."/>
            <person name="Geisler R."/>
            <person name="Plasterk R.H."/>
            <person name="Lee C."/>
            <person name="Westerfield M."/>
            <person name="de Jong P.J."/>
            <person name="Zon L.I."/>
            <person name="Postlethwait J.H."/>
            <person name="Nusslein-Volhard C."/>
            <person name="Hubbard T.J."/>
            <person name="Roest Crollius H."/>
            <person name="Rogers J."/>
            <person name="Stemple D.L."/>
        </authorList>
    </citation>
    <scope>NUCLEOTIDE SEQUENCE [LARGE SCALE GENOMIC DNA]</scope>
    <source>
        <strain>Tuebingen</strain>
    </source>
</reference>
<reference evidence="12" key="2">
    <citation type="submission" date="2007-08" db="EMBL/GenBank/DDBJ databases">
        <authorList>
            <consortium name="NIH - Zebrafish Gene Collection (ZGC) project"/>
        </authorList>
    </citation>
    <scope>NUCLEOTIDE SEQUENCE [LARGE SCALE MRNA]</scope>
    <source>
        <tissue evidence="12">Larva</tissue>
    </source>
</reference>
<reference evidence="13" key="3">
    <citation type="journal article" date="2011" name="Dev. Dyn.">
        <title>Zebrafish Thsd7a is a neural protein required for angiogenic patterning during development.</title>
        <authorList>
            <person name="Wang C.H."/>
            <person name="Chen I.H."/>
            <person name="Kuo M.W."/>
            <person name="Su P.T."/>
            <person name="Lai Z.Y."/>
            <person name="Wang C.H."/>
            <person name="Huang W.C."/>
            <person name="Hoffman J."/>
            <person name="Kuo C.J."/>
            <person name="You M.S."/>
            <person name="Chuang Y.J."/>
        </authorList>
    </citation>
    <scope>NUCLEOTIDE SEQUENCE [MRNA] OF 52-297</scope>
    <scope>FUNCTION</scope>
    <scope>DISRUPTION PHENOTYPE</scope>
    <scope>DEVELOPMENTAL STAGE</scope>
</reference>
<reference key="4">
    <citation type="journal article" date="2016" name="J. Biomed. Sci.">
        <title>Motor neuron-derived Thsd7a is essential for zebrafish vascular development via the Notch-dll4 signaling pathway.</title>
        <authorList>
            <person name="Liu L.Y."/>
            <person name="Lin M.H."/>
            <person name="Lai Z.Y."/>
            <person name="Jiang J.P."/>
            <person name="Huang Y.C."/>
            <person name="Jao L.E."/>
            <person name="Chuang Y.J."/>
        </authorList>
    </citation>
    <scope>FUNCTION</scope>
    <scope>DISRUPTION PHENOTYPE</scope>
    <scope>DEVELOPMENTAL STAGE</scope>
</reference>
<reference key="5">
    <citation type="journal article" date="2017" name="J. Am. Soc. Nephrol.">
        <title>A Heterologous Model of Thrombospondin Type 1 Domain-Containing 7A-Associated Membranous Nephropathy.</title>
        <authorList>
            <person name="Tomas N.M."/>
            <person name="Meyer-Schwesinger C."/>
            <person name="von Spiegel H."/>
            <person name="Kotb A.M."/>
            <person name="Zahner G."/>
            <person name="Hoxha E."/>
            <person name="Helmchen U."/>
            <person name="Endlich N."/>
            <person name="Koch-Nolte F."/>
            <person name="Stahl R.A.K."/>
        </authorList>
    </citation>
    <scope>DISRUPTION PHENOTYPE</scope>
    <scope>DEVELOPMENTAL STAGE</scope>
</reference>
<name>THS7A_DANRE</name>
<organism evidence="12">
    <name type="scientific">Danio rerio</name>
    <name type="common">Zebrafish</name>
    <name type="synonym">Brachydanio rerio</name>
    <dbReference type="NCBI Taxonomy" id="7955"/>
    <lineage>
        <taxon>Eukaryota</taxon>
        <taxon>Metazoa</taxon>
        <taxon>Chordata</taxon>
        <taxon>Craniata</taxon>
        <taxon>Vertebrata</taxon>
        <taxon>Euteleostomi</taxon>
        <taxon>Actinopterygii</taxon>
        <taxon>Neopterygii</taxon>
        <taxon>Teleostei</taxon>
        <taxon>Ostariophysi</taxon>
        <taxon>Cypriniformes</taxon>
        <taxon>Danionidae</taxon>
        <taxon>Danioninae</taxon>
        <taxon>Danio</taxon>
    </lineage>
</organism>
<gene>
    <name evidence="14" type="primary">thsd7aa</name>
    <name evidence="10" type="synonym">thsd7a</name>
    <name evidence="12" type="ORF">si:dkey-12h3.1</name>
</gene>